<reference key="1">
    <citation type="journal article" date="2006" name="Science">
        <title>The 160-kilobase genome of the bacterial endosymbiont Carsonella.</title>
        <authorList>
            <person name="Nakabachi A."/>
            <person name="Yamashita A."/>
            <person name="Toh H."/>
            <person name="Ishikawa H."/>
            <person name="Dunbar H.E."/>
            <person name="Moran N.A."/>
            <person name="Hattori M."/>
        </authorList>
    </citation>
    <scope>NUCLEOTIDE SEQUENCE [LARGE SCALE GENOMIC DNA]</scope>
    <source>
        <strain>PV</strain>
    </source>
</reference>
<name>RL14_CARRP</name>
<gene>
    <name evidence="1" type="primary">rplN</name>
    <name type="ordered locus">CRP_147</name>
</gene>
<proteinExistence type="inferred from homology"/>
<organism>
    <name type="scientific">Carsonella ruddii (strain PV)</name>
    <dbReference type="NCBI Taxonomy" id="387662"/>
    <lineage>
        <taxon>Bacteria</taxon>
        <taxon>Pseudomonadati</taxon>
        <taxon>Pseudomonadota</taxon>
        <taxon>Gammaproteobacteria</taxon>
        <taxon>Oceanospirillales</taxon>
        <taxon>Halomonadaceae</taxon>
        <taxon>Zymobacter group</taxon>
        <taxon>Candidatus Carsonella</taxon>
    </lineage>
</organism>
<feature type="chain" id="PRO_0000355811" description="Large ribosomal subunit protein uL14">
    <location>
        <begin position="1"/>
        <end position="122"/>
    </location>
</feature>
<comment type="function">
    <text evidence="1">Binds to 23S rRNA. Forms part of two intersubunit bridges in the 70S ribosome.</text>
</comment>
<comment type="subunit">
    <text evidence="1">Part of the 50S ribosomal subunit. Forms a cluster with proteins L3 and L19. In the 70S ribosome, L14 and L19 interact and together make contacts with the 16S rRNA in bridges B5 and B8.</text>
</comment>
<comment type="similarity">
    <text evidence="1">Belongs to the universal ribosomal protein uL14 family.</text>
</comment>
<sequence>MIQEQTYLKVADNSGGKIVKCIKVLNGTNKKYANIGEIIKVVVKTANFKSKIKKSQVLKAMIIRSKTGIKRLDGTIIKFNDNSVILLNNNEQIISTRVFGIILRELKNEKFAKLISLSNEII</sequence>
<dbReference type="EMBL" id="AP009180">
    <property type="protein sequence ID" value="BAF35178.1"/>
    <property type="molecule type" value="Genomic_DNA"/>
</dbReference>
<dbReference type="RefSeq" id="WP_011672370.1">
    <property type="nucleotide sequence ID" value="NC_008512.1"/>
</dbReference>
<dbReference type="SMR" id="Q05FJ3"/>
<dbReference type="STRING" id="387662.CRP_147"/>
<dbReference type="KEGG" id="crp:CRP_147"/>
<dbReference type="HOGENOM" id="CLU_095071_2_1_6"/>
<dbReference type="OrthoDB" id="9806379at2"/>
<dbReference type="Proteomes" id="UP000000777">
    <property type="component" value="Chromosome"/>
</dbReference>
<dbReference type="GO" id="GO:0022625">
    <property type="term" value="C:cytosolic large ribosomal subunit"/>
    <property type="evidence" value="ECO:0007669"/>
    <property type="project" value="TreeGrafter"/>
</dbReference>
<dbReference type="GO" id="GO:0070180">
    <property type="term" value="F:large ribosomal subunit rRNA binding"/>
    <property type="evidence" value="ECO:0007669"/>
    <property type="project" value="TreeGrafter"/>
</dbReference>
<dbReference type="GO" id="GO:0003735">
    <property type="term" value="F:structural constituent of ribosome"/>
    <property type="evidence" value="ECO:0007669"/>
    <property type="project" value="InterPro"/>
</dbReference>
<dbReference type="GO" id="GO:0006412">
    <property type="term" value="P:translation"/>
    <property type="evidence" value="ECO:0007669"/>
    <property type="project" value="UniProtKB-UniRule"/>
</dbReference>
<dbReference type="CDD" id="cd00337">
    <property type="entry name" value="Ribosomal_uL14"/>
    <property type="match status" value="1"/>
</dbReference>
<dbReference type="Gene3D" id="2.40.150.20">
    <property type="entry name" value="Ribosomal protein L14"/>
    <property type="match status" value="1"/>
</dbReference>
<dbReference type="HAMAP" id="MF_01367">
    <property type="entry name" value="Ribosomal_uL14"/>
    <property type="match status" value="1"/>
</dbReference>
<dbReference type="InterPro" id="IPR000218">
    <property type="entry name" value="Ribosomal_uL14"/>
</dbReference>
<dbReference type="InterPro" id="IPR005745">
    <property type="entry name" value="Ribosomal_uL14_bac-type"/>
</dbReference>
<dbReference type="InterPro" id="IPR036853">
    <property type="entry name" value="Ribosomal_uL14_sf"/>
</dbReference>
<dbReference type="NCBIfam" id="TIGR01067">
    <property type="entry name" value="rplN_bact"/>
    <property type="match status" value="1"/>
</dbReference>
<dbReference type="PANTHER" id="PTHR11761">
    <property type="entry name" value="50S/60S RIBOSOMAL PROTEIN L14/L23"/>
    <property type="match status" value="1"/>
</dbReference>
<dbReference type="PANTHER" id="PTHR11761:SF3">
    <property type="entry name" value="LARGE RIBOSOMAL SUBUNIT PROTEIN UL14M"/>
    <property type="match status" value="1"/>
</dbReference>
<dbReference type="Pfam" id="PF00238">
    <property type="entry name" value="Ribosomal_L14"/>
    <property type="match status" value="1"/>
</dbReference>
<dbReference type="SMART" id="SM01374">
    <property type="entry name" value="Ribosomal_L14"/>
    <property type="match status" value="1"/>
</dbReference>
<dbReference type="SUPFAM" id="SSF50193">
    <property type="entry name" value="Ribosomal protein L14"/>
    <property type="match status" value="1"/>
</dbReference>
<keyword id="KW-0687">Ribonucleoprotein</keyword>
<keyword id="KW-0689">Ribosomal protein</keyword>
<keyword id="KW-0694">RNA-binding</keyword>
<keyword id="KW-0699">rRNA-binding</keyword>
<accession>Q05FJ3</accession>
<evidence type="ECO:0000255" key="1">
    <source>
        <dbReference type="HAMAP-Rule" id="MF_01367"/>
    </source>
</evidence>
<evidence type="ECO:0000305" key="2"/>
<protein>
    <recommendedName>
        <fullName evidence="1">Large ribosomal subunit protein uL14</fullName>
    </recommendedName>
    <alternativeName>
        <fullName evidence="2">50S ribosomal protein L14</fullName>
    </alternativeName>
</protein>